<protein>
    <recommendedName>
        <fullName>NADH-quinone oxidoreductase subunit L</fullName>
        <ecNumber>7.1.1.-</ecNumber>
    </recommendedName>
    <alternativeName>
        <fullName>NADH dehydrogenase I subunit L</fullName>
    </alternativeName>
    <alternativeName>
        <fullName>NDH-1 subunit L</fullName>
    </alternativeName>
</protein>
<reference key="1">
    <citation type="journal article" date="2002" name="J. Bacteriol.">
        <title>Whole-genome comparison of Mycobacterium tuberculosis clinical and laboratory strains.</title>
        <authorList>
            <person name="Fleischmann R.D."/>
            <person name="Alland D."/>
            <person name="Eisen J.A."/>
            <person name="Carpenter L."/>
            <person name="White O."/>
            <person name="Peterson J.D."/>
            <person name="DeBoy R.T."/>
            <person name="Dodson R.J."/>
            <person name="Gwinn M.L."/>
            <person name="Haft D.H."/>
            <person name="Hickey E.K."/>
            <person name="Kolonay J.F."/>
            <person name="Nelson W.C."/>
            <person name="Umayam L.A."/>
            <person name="Ermolaeva M.D."/>
            <person name="Salzberg S.L."/>
            <person name="Delcher A."/>
            <person name="Utterback T.R."/>
            <person name="Weidman J.F."/>
            <person name="Khouri H.M."/>
            <person name="Gill J."/>
            <person name="Mikula A."/>
            <person name="Bishai W."/>
            <person name="Jacobs W.R. Jr."/>
            <person name="Venter J.C."/>
            <person name="Fraser C.M."/>
        </authorList>
    </citation>
    <scope>NUCLEOTIDE SEQUENCE [LARGE SCALE GENOMIC DNA]</scope>
    <source>
        <strain>CDC 1551 / Oshkosh</strain>
    </source>
</reference>
<accession>P9WIW0</accession>
<accession>L0TBP6</accession>
<accession>O86350</accession>
<comment type="function">
    <text evidence="1">NDH-1 shuttles electrons from NADH, via FMN and iron-sulfur (Fe-S) centers, to quinones in the respiratory chain. The immediate electron acceptor for the enzyme in this species is believed to be menaquinone. Couples the redox reaction to proton translocation (for every two electrons transferred, four hydrogen ions are translocated across the cytoplasmic membrane), and thus conserves the redox energy in a proton gradient (By similarity).</text>
</comment>
<comment type="catalytic activity">
    <reaction>
        <text>a quinone + NADH + 5 H(+)(in) = a quinol + NAD(+) + 4 H(+)(out)</text>
        <dbReference type="Rhea" id="RHEA:57888"/>
        <dbReference type="ChEBI" id="CHEBI:15378"/>
        <dbReference type="ChEBI" id="CHEBI:24646"/>
        <dbReference type="ChEBI" id="CHEBI:57540"/>
        <dbReference type="ChEBI" id="CHEBI:57945"/>
        <dbReference type="ChEBI" id="CHEBI:132124"/>
    </reaction>
</comment>
<comment type="subcellular location">
    <subcellularLocation>
        <location evidence="3">Cell membrane</location>
        <topology evidence="3">Multi-pass membrane protein</topology>
    </subcellularLocation>
</comment>
<comment type="similarity">
    <text evidence="3">Belongs to the complex I subunit 5 family.</text>
</comment>
<organism>
    <name type="scientific">Mycobacterium tuberculosis (strain CDC 1551 / Oshkosh)</name>
    <dbReference type="NCBI Taxonomy" id="83331"/>
    <lineage>
        <taxon>Bacteria</taxon>
        <taxon>Bacillati</taxon>
        <taxon>Actinomycetota</taxon>
        <taxon>Actinomycetes</taxon>
        <taxon>Mycobacteriales</taxon>
        <taxon>Mycobacteriaceae</taxon>
        <taxon>Mycobacterium</taxon>
        <taxon>Mycobacterium tuberculosis complex</taxon>
    </lineage>
</organism>
<sequence length="633" mass="66168">MTTSLGTHYTWLLVALPLAGAAILLFGGRRTDAWGHLLGCAAALAAFGVGAMLLADMLGRDGLERAIHQQVFTWIPAGGLQVDFGLQIDQLSMCFVLLISGVGSLIHIYSVGYMAEDPDRRRFFGYLNLFLASMLLLVVADNYVLLYVGWEGVGLASYLLIGFWYHKPSAATAAKKAFVMNRVGDAGLAVGMFLTFSTFGTLSYAGVFAGVPAASRAVLTAIGLLMLLGACAKSAQVPLQAWLGDAMEGPTPVSALIHAATMVTAGVYLIVRSGPLYNLAPTAQLAVVIVGAVTLLFGAIIGCAKDDIKRALAASTISQIGYMVLAAGLGPAGYAFAIMHLLTHGFFKAGLFLGSGAVIHAMHEEQDMRRYGGLRAALPVTFATFGLAYLAIIGVPPFAGFFSKDAIIEAALGAGGIRGSLLGGAALLGAGVTAFYMTRVMLMTFFGEKRWTPGAHPHEAPAVMTWPMILLAVGSVFSGGLLAVGGTLRHWLQPVVGSHEEATHALPTWVATTLALGVVAVGIAVAYRMYGTAPIPRVAPVRVSALTAAARADLYGDAFNEEVFMRPGAQLTNAVVAVDDAGVDGSVNALATLVSQTSNRLRQMQTGFARNYALSMLVGAVLVAAALLVVQLW</sequence>
<feature type="chain" id="PRO_0000427936" description="NADH-quinone oxidoreductase subunit L">
    <location>
        <begin position="1"/>
        <end position="633"/>
    </location>
</feature>
<feature type="transmembrane region" description="Helical" evidence="2">
    <location>
        <begin position="8"/>
        <end position="28"/>
    </location>
</feature>
<feature type="transmembrane region" description="Helical" evidence="2">
    <location>
        <begin position="34"/>
        <end position="54"/>
    </location>
</feature>
<feature type="transmembrane region" description="Helical" evidence="2">
    <location>
        <begin position="95"/>
        <end position="115"/>
    </location>
</feature>
<feature type="transmembrane region" description="Helical" evidence="2">
    <location>
        <begin position="123"/>
        <end position="143"/>
    </location>
</feature>
<feature type="transmembrane region" description="Helical" evidence="2">
    <location>
        <begin position="188"/>
        <end position="208"/>
    </location>
</feature>
<feature type="transmembrane region" description="Helical" evidence="2">
    <location>
        <begin position="209"/>
        <end position="229"/>
    </location>
</feature>
<feature type="transmembrane region" description="Helical" evidence="2">
    <location>
        <begin position="251"/>
        <end position="271"/>
    </location>
</feature>
<feature type="transmembrane region" description="Helical" evidence="2">
    <location>
        <begin position="284"/>
        <end position="304"/>
    </location>
</feature>
<feature type="transmembrane region" description="Helical" evidence="2">
    <location>
        <begin position="322"/>
        <end position="342"/>
    </location>
</feature>
<feature type="transmembrane region" description="Helical" evidence="2">
    <location>
        <begin position="382"/>
        <end position="402"/>
    </location>
</feature>
<feature type="transmembrane region" description="Helical" evidence="2">
    <location>
        <begin position="412"/>
        <end position="432"/>
    </location>
</feature>
<feature type="transmembrane region" description="Helical" evidence="2">
    <location>
        <begin position="468"/>
        <end position="488"/>
    </location>
</feature>
<feature type="transmembrane region" description="Helical" evidence="2">
    <location>
        <begin position="505"/>
        <end position="525"/>
    </location>
</feature>
<feature type="transmembrane region" description="Helical" evidence="2">
    <location>
        <begin position="613"/>
        <end position="633"/>
    </location>
</feature>
<gene>
    <name type="primary">nuoL</name>
    <name type="ordered locus">MT3244</name>
</gene>
<keyword id="KW-1003">Cell membrane</keyword>
<keyword id="KW-0472">Membrane</keyword>
<keyword id="KW-0520">NAD</keyword>
<keyword id="KW-0874">Quinone</keyword>
<keyword id="KW-1185">Reference proteome</keyword>
<keyword id="KW-1278">Translocase</keyword>
<keyword id="KW-0812">Transmembrane</keyword>
<keyword id="KW-1133">Transmembrane helix</keyword>
<proteinExistence type="inferred from homology"/>
<dbReference type="EC" id="7.1.1.-"/>
<dbReference type="EMBL" id="AE000516">
    <property type="protein sequence ID" value="AAK47583.1"/>
    <property type="molecule type" value="Genomic_DNA"/>
</dbReference>
<dbReference type="PIR" id="B70946">
    <property type="entry name" value="B70946"/>
</dbReference>
<dbReference type="RefSeq" id="WP_003900642.1">
    <property type="nucleotide sequence ID" value="NZ_KK341227.1"/>
</dbReference>
<dbReference type="SMR" id="P9WIW0"/>
<dbReference type="KEGG" id="mtc:MT3244"/>
<dbReference type="PATRIC" id="fig|83331.31.peg.3492"/>
<dbReference type="HOGENOM" id="CLU_007100_6_0_11"/>
<dbReference type="Proteomes" id="UP000001020">
    <property type="component" value="Chromosome"/>
</dbReference>
<dbReference type="GO" id="GO:0005886">
    <property type="term" value="C:plasma membrane"/>
    <property type="evidence" value="ECO:0007669"/>
    <property type="project" value="UniProtKB-SubCell"/>
</dbReference>
<dbReference type="GO" id="GO:0008137">
    <property type="term" value="F:NADH dehydrogenase (ubiquinone) activity"/>
    <property type="evidence" value="ECO:0007669"/>
    <property type="project" value="InterPro"/>
</dbReference>
<dbReference type="GO" id="GO:0048038">
    <property type="term" value="F:quinone binding"/>
    <property type="evidence" value="ECO:0007669"/>
    <property type="project" value="UniProtKB-KW"/>
</dbReference>
<dbReference type="GO" id="GO:0042773">
    <property type="term" value="P:ATP synthesis coupled electron transport"/>
    <property type="evidence" value="ECO:0007669"/>
    <property type="project" value="InterPro"/>
</dbReference>
<dbReference type="GO" id="GO:0015990">
    <property type="term" value="P:electron transport coupled proton transport"/>
    <property type="evidence" value="ECO:0007669"/>
    <property type="project" value="TreeGrafter"/>
</dbReference>
<dbReference type="Gene3D" id="1.20.5.2700">
    <property type="match status" value="1"/>
</dbReference>
<dbReference type="InterPro" id="IPR018393">
    <property type="entry name" value="NADHpl_OxRdtase_5_subgr"/>
</dbReference>
<dbReference type="InterPro" id="IPR001750">
    <property type="entry name" value="ND/Mrp_TM"/>
</dbReference>
<dbReference type="InterPro" id="IPR003945">
    <property type="entry name" value="NU5C-like"/>
</dbReference>
<dbReference type="InterPro" id="IPR001516">
    <property type="entry name" value="Proton_antipo_N"/>
</dbReference>
<dbReference type="NCBIfam" id="TIGR01974">
    <property type="entry name" value="NDH_I_L"/>
    <property type="match status" value="1"/>
</dbReference>
<dbReference type="NCBIfam" id="NF005141">
    <property type="entry name" value="PRK06590.1"/>
    <property type="match status" value="1"/>
</dbReference>
<dbReference type="PANTHER" id="PTHR42829">
    <property type="entry name" value="NADH-UBIQUINONE OXIDOREDUCTASE CHAIN 5"/>
    <property type="match status" value="1"/>
</dbReference>
<dbReference type="PANTHER" id="PTHR42829:SF2">
    <property type="entry name" value="NADH-UBIQUINONE OXIDOREDUCTASE CHAIN 5"/>
    <property type="match status" value="1"/>
</dbReference>
<dbReference type="Pfam" id="PF00361">
    <property type="entry name" value="Proton_antipo_M"/>
    <property type="match status" value="1"/>
</dbReference>
<dbReference type="Pfam" id="PF00662">
    <property type="entry name" value="Proton_antipo_N"/>
    <property type="match status" value="1"/>
</dbReference>
<dbReference type="PRINTS" id="PR01434">
    <property type="entry name" value="NADHDHGNASE5"/>
</dbReference>
<dbReference type="PRINTS" id="PR01435">
    <property type="entry name" value="NPOXDRDTASE5"/>
</dbReference>
<name>NUOL_MYCTO</name>
<evidence type="ECO:0000250" key="1"/>
<evidence type="ECO:0000255" key="2"/>
<evidence type="ECO:0000305" key="3"/>